<evidence type="ECO:0000305" key="1"/>
<keyword id="KW-1185">Reference proteome</keyword>
<name>HSL22_DICDI</name>
<protein>
    <recommendedName>
        <fullName>HssA/B-like protein 22</fullName>
    </recommendedName>
</protein>
<reference key="1">
    <citation type="journal article" date="2002" name="Nature">
        <title>Sequence and analysis of chromosome 2 of Dictyostelium discoideum.</title>
        <authorList>
            <person name="Gloeckner G."/>
            <person name="Eichinger L."/>
            <person name="Szafranski K."/>
            <person name="Pachebat J.A."/>
            <person name="Bankier A.T."/>
            <person name="Dear P.H."/>
            <person name="Lehmann R."/>
            <person name="Baumgart C."/>
            <person name="Parra G."/>
            <person name="Abril J.F."/>
            <person name="Guigo R."/>
            <person name="Kumpf K."/>
            <person name="Tunggal B."/>
            <person name="Cox E.C."/>
            <person name="Quail M.A."/>
            <person name="Platzer M."/>
            <person name="Rosenthal A."/>
            <person name="Noegel A.A."/>
        </authorList>
    </citation>
    <scope>NUCLEOTIDE SEQUENCE [LARGE SCALE GENOMIC DNA]</scope>
    <source>
        <strain>AX4</strain>
    </source>
</reference>
<reference key="2">
    <citation type="journal article" date="2005" name="Nature">
        <title>The genome of the social amoeba Dictyostelium discoideum.</title>
        <authorList>
            <person name="Eichinger L."/>
            <person name="Pachebat J.A."/>
            <person name="Gloeckner G."/>
            <person name="Rajandream M.A."/>
            <person name="Sucgang R."/>
            <person name="Berriman M."/>
            <person name="Song J."/>
            <person name="Olsen R."/>
            <person name="Szafranski K."/>
            <person name="Xu Q."/>
            <person name="Tunggal B."/>
            <person name="Kummerfeld S."/>
            <person name="Madera M."/>
            <person name="Konfortov B.A."/>
            <person name="Rivero F."/>
            <person name="Bankier A.T."/>
            <person name="Lehmann R."/>
            <person name="Hamlin N."/>
            <person name="Davies R."/>
            <person name="Gaudet P."/>
            <person name="Fey P."/>
            <person name="Pilcher K."/>
            <person name="Chen G."/>
            <person name="Saunders D."/>
            <person name="Sodergren E.J."/>
            <person name="Davis P."/>
            <person name="Kerhornou A."/>
            <person name="Nie X."/>
            <person name="Hall N."/>
            <person name="Anjard C."/>
            <person name="Hemphill L."/>
            <person name="Bason N."/>
            <person name="Farbrother P."/>
            <person name="Desany B."/>
            <person name="Just E."/>
            <person name="Morio T."/>
            <person name="Rost R."/>
            <person name="Churcher C.M."/>
            <person name="Cooper J."/>
            <person name="Haydock S."/>
            <person name="van Driessche N."/>
            <person name="Cronin A."/>
            <person name="Goodhead I."/>
            <person name="Muzny D.M."/>
            <person name="Mourier T."/>
            <person name="Pain A."/>
            <person name="Lu M."/>
            <person name="Harper D."/>
            <person name="Lindsay R."/>
            <person name="Hauser H."/>
            <person name="James K.D."/>
            <person name="Quiles M."/>
            <person name="Madan Babu M."/>
            <person name="Saito T."/>
            <person name="Buchrieser C."/>
            <person name="Wardroper A."/>
            <person name="Felder M."/>
            <person name="Thangavelu M."/>
            <person name="Johnson D."/>
            <person name="Knights A."/>
            <person name="Loulseged H."/>
            <person name="Mungall K.L."/>
            <person name="Oliver K."/>
            <person name="Price C."/>
            <person name="Quail M.A."/>
            <person name="Urushihara H."/>
            <person name="Hernandez J."/>
            <person name="Rabbinowitsch E."/>
            <person name="Steffen D."/>
            <person name="Sanders M."/>
            <person name="Ma J."/>
            <person name="Kohara Y."/>
            <person name="Sharp S."/>
            <person name="Simmonds M.N."/>
            <person name="Spiegler S."/>
            <person name="Tivey A."/>
            <person name="Sugano S."/>
            <person name="White B."/>
            <person name="Walker D."/>
            <person name="Woodward J.R."/>
            <person name="Winckler T."/>
            <person name="Tanaka Y."/>
            <person name="Shaulsky G."/>
            <person name="Schleicher M."/>
            <person name="Weinstock G.M."/>
            <person name="Rosenthal A."/>
            <person name="Cox E.C."/>
            <person name="Chisholm R.L."/>
            <person name="Gibbs R.A."/>
            <person name="Loomis W.F."/>
            <person name="Platzer M."/>
            <person name="Kay R.R."/>
            <person name="Williams J.G."/>
            <person name="Dear P.H."/>
            <person name="Noegel A.A."/>
            <person name="Barrell B.G."/>
            <person name="Kuspa A."/>
        </authorList>
    </citation>
    <scope>NUCLEOTIDE SEQUENCE [LARGE SCALE GENOMIC DNA]</scope>
    <source>
        <strain>AX4</strain>
    </source>
</reference>
<comment type="similarity">
    <text evidence="1">Belongs to the hssA/B family.</text>
</comment>
<dbReference type="EMBL" id="AAFI02000008">
    <property type="protein sequence ID" value="EAS66967.1"/>
    <property type="molecule type" value="Genomic_DNA"/>
</dbReference>
<dbReference type="RefSeq" id="XP_001134633.1">
    <property type="nucleotide sequence ID" value="XM_001134633.1"/>
</dbReference>
<dbReference type="PaxDb" id="44689-DDB0232259"/>
<dbReference type="EnsemblProtists" id="EAS66967">
    <property type="protein sequence ID" value="EAS66967"/>
    <property type="gene ID" value="DDB_G0272927"/>
</dbReference>
<dbReference type="GeneID" id="8618682"/>
<dbReference type="KEGG" id="ddi:DDB_G0272927"/>
<dbReference type="dictyBase" id="DDB_G0272927">
    <property type="gene designation" value="sigN3"/>
</dbReference>
<dbReference type="HOGENOM" id="CLU_190274_0_0_1"/>
<dbReference type="InParanoid" id="Q7KWN8"/>
<dbReference type="OMA" id="NNVACAC"/>
<dbReference type="PRO" id="PR:Q7KWN8"/>
<dbReference type="Proteomes" id="UP000002195">
    <property type="component" value="Chromosome 2"/>
</dbReference>
<dbReference type="InterPro" id="IPR008455">
    <property type="entry name" value="HssA/B-related"/>
</dbReference>
<dbReference type="PANTHER" id="PTHR31857">
    <property type="entry name" value="HSSA/B-LIKE PROTEIN 17-RELATED"/>
    <property type="match status" value="1"/>
</dbReference>
<dbReference type="PANTHER" id="PTHR31857:SF2">
    <property type="entry name" value="HSSA_B-LIKE PROTEIN 17-RELATED"/>
    <property type="match status" value="1"/>
</dbReference>
<dbReference type="Pfam" id="PF05710">
    <property type="entry name" value="Coiled"/>
    <property type="match status" value="1"/>
</dbReference>
<feature type="chain" id="PRO_0000330392" description="HssA/B-like protein 22">
    <location>
        <begin position="1"/>
        <end position="89"/>
    </location>
</feature>
<sequence length="89" mass="8327">MTILGSISSIGNVKSITKSNNLSSLSNSSSSTQSMNSIQCGGGCGNGGLLGGVGGLVGGVLVGTGVIIGSVLHGVGSILTGGSNNCGCN</sequence>
<organism>
    <name type="scientific">Dictyostelium discoideum</name>
    <name type="common">Social amoeba</name>
    <dbReference type="NCBI Taxonomy" id="44689"/>
    <lineage>
        <taxon>Eukaryota</taxon>
        <taxon>Amoebozoa</taxon>
        <taxon>Evosea</taxon>
        <taxon>Eumycetozoa</taxon>
        <taxon>Dictyostelia</taxon>
        <taxon>Dictyosteliales</taxon>
        <taxon>Dictyosteliaceae</taxon>
        <taxon>Dictyostelium</taxon>
    </lineage>
</organism>
<gene>
    <name type="primary">hssl22</name>
    <name type="ORF">DDB_G0272927</name>
</gene>
<proteinExistence type="inferred from homology"/>
<accession>Q7KWN8</accession>
<accession>Q1ZXL8</accession>